<comment type="function">
    <text evidence="1">Could be a mediator in iron transactions between iron acquisition and iron-requiring processes, such as synthesis and/or repair of Fe-S clusters in biosynthetic enzymes.</text>
</comment>
<comment type="similarity">
    <text evidence="1">Belongs to the Fe(2+)-trafficking protein family.</text>
</comment>
<proteinExistence type="inferred from homology"/>
<protein>
    <recommendedName>
        <fullName evidence="1">Probable Fe(2+)-trafficking protein</fullName>
    </recommendedName>
</protein>
<reference key="1">
    <citation type="journal article" date="2009" name="J. Bacteriol.">
        <title>The genome of Burkholderia cenocepacia J2315, an epidemic pathogen of cystic fibrosis patients.</title>
        <authorList>
            <person name="Holden M.T."/>
            <person name="Seth-Smith H.M."/>
            <person name="Crossman L.C."/>
            <person name="Sebaihia M."/>
            <person name="Bentley S.D."/>
            <person name="Cerdeno-Tarraga A.M."/>
            <person name="Thomson N.R."/>
            <person name="Bason N."/>
            <person name="Quail M.A."/>
            <person name="Sharp S."/>
            <person name="Cherevach I."/>
            <person name="Churcher C."/>
            <person name="Goodhead I."/>
            <person name="Hauser H."/>
            <person name="Holroyd N."/>
            <person name="Mungall K."/>
            <person name="Scott P."/>
            <person name="Walker D."/>
            <person name="White B."/>
            <person name="Rose H."/>
            <person name="Iversen P."/>
            <person name="Mil-Homens D."/>
            <person name="Rocha E.P."/>
            <person name="Fialho A.M."/>
            <person name="Baldwin A."/>
            <person name="Dowson C."/>
            <person name="Barrell B.G."/>
            <person name="Govan J.R."/>
            <person name="Vandamme P."/>
            <person name="Hart C.A."/>
            <person name="Mahenthiralingam E."/>
            <person name="Parkhill J."/>
        </authorList>
    </citation>
    <scope>NUCLEOTIDE SEQUENCE [LARGE SCALE GENOMIC DNA]</scope>
    <source>
        <strain>ATCC BAA-245 / DSM 16553 / LMG 16656 / NCTC 13227 / J2315 / CF5610</strain>
    </source>
</reference>
<evidence type="ECO:0000255" key="1">
    <source>
        <dbReference type="HAMAP-Rule" id="MF_00686"/>
    </source>
</evidence>
<dbReference type="EMBL" id="AM747720">
    <property type="protein sequence ID" value="CAR52533.1"/>
    <property type="molecule type" value="Genomic_DNA"/>
</dbReference>
<dbReference type="RefSeq" id="WP_006478357.1">
    <property type="nucleotide sequence ID" value="NC_011000.1"/>
</dbReference>
<dbReference type="SMR" id="B4EDW1"/>
<dbReference type="KEGG" id="bcj:BCAL2232"/>
<dbReference type="eggNOG" id="COG2924">
    <property type="taxonomic scope" value="Bacteria"/>
</dbReference>
<dbReference type="HOGENOM" id="CLU_170994_0_0_4"/>
<dbReference type="BioCyc" id="BCEN216591:G1G1V-2456-MONOMER"/>
<dbReference type="Proteomes" id="UP000001035">
    <property type="component" value="Chromosome 1"/>
</dbReference>
<dbReference type="GO" id="GO:0005829">
    <property type="term" value="C:cytosol"/>
    <property type="evidence" value="ECO:0007669"/>
    <property type="project" value="TreeGrafter"/>
</dbReference>
<dbReference type="GO" id="GO:0005506">
    <property type="term" value="F:iron ion binding"/>
    <property type="evidence" value="ECO:0007669"/>
    <property type="project" value="UniProtKB-UniRule"/>
</dbReference>
<dbReference type="GO" id="GO:0034599">
    <property type="term" value="P:cellular response to oxidative stress"/>
    <property type="evidence" value="ECO:0007669"/>
    <property type="project" value="TreeGrafter"/>
</dbReference>
<dbReference type="FunFam" id="1.10.3880.10:FF:000001">
    <property type="entry name" value="Probable Fe(2+)-trafficking protein"/>
    <property type="match status" value="1"/>
</dbReference>
<dbReference type="Gene3D" id="1.10.3880.10">
    <property type="entry name" value="Fe(II) trafficking protein YggX"/>
    <property type="match status" value="1"/>
</dbReference>
<dbReference type="HAMAP" id="MF_00686">
    <property type="entry name" value="Fe_traffic_YggX"/>
    <property type="match status" value="1"/>
</dbReference>
<dbReference type="InterPro" id="IPR007457">
    <property type="entry name" value="Fe_traffick_prot_YggX"/>
</dbReference>
<dbReference type="InterPro" id="IPR036766">
    <property type="entry name" value="Fe_traffick_prot_YggX_sf"/>
</dbReference>
<dbReference type="NCBIfam" id="NF003817">
    <property type="entry name" value="PRK05408.1"/>
    <property type="match status" value="1"/>
</dbReference>
<dbReference type="PANTHER" id="PTHR36965">
    <property type="entry name" value="FE(2+)-TRAFFICKING PROTEIN-RELATED"/>
    <property type="match status" value="1"/>
</dbReference>
<dbReference type="PANTHER" id="PTHR36965:SF1">
    <property type="entry name" value="FE(2+)-TRAFFICKING PROTEIN-RELATED"/>
    <property type="match status" value="1"/>
</dbReference>
<dbReference type="Pfam" id="PF04362">
    <property type="entry name" value="Iron_traffic"/>
    <property type="match status" value="1"/>
</dbReference>
<dbReference type="PIRSF" id="PIRSF029827">
    <property type="entry name" value="Fe_traffic_YggX"/>
    <property type="match status" value="1"/>
</dbReference>
<dbReference type="SUPFAM" id="SSF111148">
    <property type="entry name" value="YggX-like"/>
    <property type="match status" value="1"/>
</dbReference>
<organism>
    <name type="scientific">Burkholderia cenocepacia (strain ATCC BAA-245 / DSM 16553 / LMG 16656 / NCTC 13227 / J2315 / CF5610)</name>
    <name type="common">Burkholderia cepacia (strain J2315)</name>
    <dbReference type="NCBI Taxonomy" id="216591"/>
    <lineage>
        <taxon>Bacteria</taxon>
        <taxon>Pseudomonadati</taxon>
        <taxon>Pseudomonadota</taxon>
        <taxon>Betaproteobacteria</taxon>
        <taxon>Burkholderiales</taxon>
        <taxon>Burkholderiaceae</taxon>
        <taxon>Burkholderia</taxon>
        <taxon>Burkholderia cepacia complex</taxon>
    </lineage>
</organism>
<name>FETP_BURCJ</name>
<sequence length="91" mass="10327">MARMIQCAKLGKEAEGLDFPPLPGELGKRIYESVSKEAWQGWLKQQTMLINENRLNMADPRARQYLMKQTEKYFFGDGADQASGYVPPTEG</sequence>
<feature type="chain" id="PRO_1000131830" description="Probable Fe(2+)-trafficking protein">
    <location>
        <begin position="1"/>
        <end position="91"/>
    </location>
</feature>
<accession>B4EDW1</accession>
<gene>
    <name type="ordered locus">BceJ2315_21940</name>
    <name type="ORF">BCAL2232</name>
</gene>
<keyword id="KW-0408">Iron</keyword>